<gene>
    <name evidence="1" type="primary">rplR</name>
    <name evidence="1" type="synonym">rpl18</name>
    <name type="ordered locus">SynRCC307_2131</name>
</gene>
<keyword id="KW-1185">Reference proteome</keyword>
<keyword id="KW-0687">Ribonucleoprotein</keyword>
<keyword id="KW-0689">Ribosomal protein</keyword>
<keyword id="KW-0694">RNA-binding</keyword>
<keyword id="KW-0699">rRNA-binding</keyword>
<reference key="1">
    <citation type="submission" date="2006-05" db="EMBL/GenBank/DDBJ databases">
        <authorList>
            <consortium name="Genoscope"/>
        </authorList>
    </citation>
    <scope>NUCLEOTIDE SEQUENCE [LARGE SCALE GENOMIC DNA]</scope>
    <source>
        <strain>RCC307</strain>
    </source>
</reference>
<comment type="function">
    <text evidence="1">This is one of the proteins that bind and probably mediate the attachment of the 5S RNA into the large ribosomal subunit, where it forms part of the central protuberance.</text>
</comment>
<comment type="subunit">
    <text evidence="1">Part of the 50S ribosomal subunit; part of the 5S rRNA/L5/L18/L25 subcomplex. Contacts the 5S and 23S rRNAs.</text>
</comment>
<comment type="similarity">
    <text evidence="1">Belongs to the universal ribosomal protein uL18 family.</text>
</comment>
<sequence length="120" mass="13286">MSTPRKEQTQKRHRRLRRHLEGTPERPRLAVYRSNEHIYAQVIDDAAQHTLAAASSLDKDLRTSLNNGANCDASTAVGQLVAKRAIAKGIQQVVFDRGGNLYHGRVKALAEAAREAGLQF</sequence>
<evidence type="ECO:0000255" key="1">
    <source>
        <dbReference type="HAMAP-Rule" id="MF_01337"/>
    </source>
</evidence>
<evidence type="ECO:0000256" key="2">
    <source>
        <dbReference type="SAM" id="MobiDB-lite"/>
    </source>
</evidence>
<evidence type="ECO:0000305" key="3"/>
<name>RL18_SYNR3</name>
<proteinExistence type="inferred from homology"/>
<accession>A5GVX5</accession>
<organism>
    <name type="scientific">Synechococcus sp. (strain RCC307)</name>
    <dbReference type="NCBI Taxonomy" id="316278"/>
    <lineage>
        <taxon>Bacteria</taxon>
        <taxon>Bacillati</taxon>
        <taxon>Cyanobacteriota</taxon>
        <taxon>Cyanophyceae</taxon>
        <taxon>Synechococcales</taxon>
        <taxon>Synechococcaceae</taxon>
        <taxon>Synechococcus</taxon>
    </lineage>
</organism>
<protein>
    <recommendedName>
        <fullName evidence="1">Large ribosomal subunit protein uL18</fullName>
    </recommendedName>
    <alternativeName>
        <fullName evidence="3">50S ribosomal protein L18</fullName>
    </alternativeName>
</protein>
<feature type="chain" id="PRO_1000053128" description="Large ribosomal subunit protein uL18">
    <location>
        <begin position="1"/>
        <end position="120"/>
    </location>
</feature>
<feature type="region of interest" description="Disordered" evidence="2">
    <location>
        <begin position="1"/>
        <end position="25"/>
    </location>
</feature>
<feature type="compositionally biased region" description="Basic and acidic residues" evidence="2">
    <location>
        <begin position="1"/>
        <end position="10"/>
    </location>
</feature>
<dbReference type="EMBL" id="CT978603">
    <property type="protein sequence ID" value="CAK29034.1"/>
    <property type="molecule type" value="Genomic_DNA"/>
</dbReference>
<dbReference type="SMR" id="A5GVX5"/>
<dbReference type="STRING" id="316278.SynRCC307_2131"/>
<dbReference type="KEGG" id="syr:SynRCC307_2131"/>
<dbReference type="eggNOG" id="COG0256">
    <property type="taxonomic scope" value="Bacteria"/>
</dbReference>
<dbReference type="HOGENOM" id="CLU_098841_0_1_3"/>
<dbReference type="OrthoDB" id="9810939at2"/>
<dbReference type="Proteomes" id="UP000001115">
    <property type="component" value="Chromosome"/>
</dbReference>
<dbReference type="GO" id="GO:0022625">
    <property type="term" value="C:cytosolic large ribosomal subunit"/>
    <property type="evidence" value="ECO:0007669"/>
    <property type="project" value="TreeGrafter"/>
</dbReference>
<dbReference type="GO" id="GO:0008097">
    <property type="term" value="F:5S rRNA binding"/>
    <property type="evidence" value="ECO:0007669"/>
    <property type="project" value="TreeGrafter"/>
</dbReference>
<dbReference type="GO" id="GO:0003735">
    <property type="term" value="F:structural constituent of ribosome"/>
    <property type="evidence" value="ECO:0007669"/>
    <property type="project" value="InterPro"/>
</dbReference>
<dbReference type="GO" id="GO:0006412">
    <property type="term" value="P:translation"/>
    <property type="evidence" value="ECO:0007669"/>
    <property type="project" value="UniProtKB-UniRule"/>
</dbReference>
<dbReference type="CDD" id="cd00432">
    <property type="entry name" value="Ribosomal_L18_L5e"/>
    <property type="match status" value="1"/>
</dbReference>
<dbReference type="FunFam" id="3.30.420.100:FF:000001">
    <property type="entry name" value="50S ribosomal protein L18"/>
    <property type="match status" value="1"/>
</dbReference>
<dbReference type="Gene3D" id="3.30.420.100">
    <property type="match status" value="1"/>
</dbReference>
<dbReference type="HAMAP" id="MF_01337_B">
    <property type="entry name" value="Ribosomal_uL18_B"/>
    <property type="match status" value="1"/>
</dbReference>
<dbReference type="InterPro" id="IPR004389">
    <property type="entry name" value="Ribosomal_uL18_bac-type"/>
</dbReference>
<dbReference type="InterPro" id="IPR005484">
    <property type="entry name" value="Ribosomal_uL18_bac/euk"/>
</dbReference>
<dbReference type="NCBIfam" id="TIGR00060">
    <property type="entry name" value="L18_bact"/>
    <property type="match status" value="1"/>
</dbReference>
<dbReference type="PANTHER" id="PTHR12899">
    <property type="entry name" value="39S RIBOSOMAL PROTEIN L18, MITOCHONDRIAL"/>
    <property type="match status" value="1"/>
</dbReference>
<dbReference type="PANTHER" id="PTHR12899:SF3">
    <property type="entry name" value="LARGE RIBOSOMAL SUBUNIT PROTEIN UL18M"/>
    <property type="match status" value="1"/>
</dbReference>
<dbReference type="Pfam" id="PF00861">
    <property type="entry name" value="Ribosomal_L18p"/>
    <property type="match status" value="1"/>
</dbReference>
<dbReference type="SUPFAM" id="SSF53137">
    <property type="entry name" value="Translational machinery components"/>
    <property type="match status" value="1"/>
</dbReference>